<name>RS7_AZOSB</name>
<organism>
    <name type="scientific">Azoarcus sp. (strain BH72)</name>
    <dbReference type="NCBI Taxonomy" id="418699"/>
    <lineage>
        <taxon>Bacteria</taxon>
        <taxon>Pseudomonadati</taxon>
        <taxon>Pseudomonadota</taxon>
        <taxon>Betaproteobacteria</taxon>
        <taxon>Rhodocyclales</taxon>
        <taxon>Zoogloeaceae</taxon>
        <taxon>Azoarcus</taxon>
    </lineage>
</organism>
<dbReference type="EMBL" id="AM406670">
    <property type="protein sequence ID" value="CAL96037.1"/>
    <property type="molecule type" value="Genomic_DNA"/>
</dbReference>
<dbReference type="RefSeq" id="WP_011767144.1">
    <property type="nucleotide sequence ID" value="NC_008702.1"/>
</dbReference>
<dbReference type="SMR" id="A1KB31"/>
<dbReference type="STRING" id="62928.azo3421"/>
<dbReference type="KEGG" id="aoa:dqs_3560"/>
<dbReference type="KEGG" id="azo:azo3421"/>
<dbReference type="eggNOG" id="COG0049">
    <property type="taxonomic scope" value="Bacteria"/>
</dbReference>
<dbReference type="HOGENOM" id="CLU_072226_1_1_4"/>
<dbReference type="OrthoDB" id="9807653at2"/>
<dbReference type="Proteomes" id="UP000002588">
    <property type="component" value="Chromosome"/>
</dbReference>
<dbReference type="GO" id="GO:0015935">
    <property type="term" value="C:small ribosomal subunit"/>
    <property type="evidence" value="ECO:0007669"/>
    <property type="project" value="InterPro"/>
</dbReference>
<dbReference type="GO" id="GO:0019843">
    <property type="term" value="F:rRNA binding"/>
    <property type="evidence" value="ECO:0007669"/>
    <property type="project" value="UniProtKB-UniRule"/>
</dbReference>
<dbReference type="GO" id="GO:0003735">
    <property type="term" value="F:structural constituent of ribosome"/>
    <property type="evidence" value="ECO:0007669"/>
    <property type="project" value="InterPro"/>
</dbReference>
<dbReference type="GO" id="GO:0000049">
    <property type="term" value="F:tRNA binding"/>
    <property type="evidence" value="ECO:0007669"/>
    <property type="project" value="UniProtKB-UniRule"/>
</dbReference>
<dbReference type="GO" id="GO:0006412">
    <property type="term" value="P:translation"/>
    <property type="evidence" value="ECO:0007669"/>
    <property type="project" value="UniProtKB-UniRule"/>
</dbReference>
<dbReference type="CDD" id="cd14869">
    <property type="entry name" value="uS7_Bacteria"/>
    <property type="match status" value="1"/>
</dbReference>
<dbReference type="FunFam" id="1.10.455.10:FF:000001">
    <property type="entry name" value="30S ribosomal protein S7"/>
    <property type="match status" value="1"/>
</dbReference>
<dbReference type="Gene3D" id="1.10.455.10">
    <property type="entry name" value="Ribosomal protein S7 domain"/>
    <property type="match status" value="1"/>
</dbReference>
<dbReference type="HAMAP" id="MF_00480_B">
    <property type="entry name" value="Ribosomal_uS7_B"/>
    <property type="match status" value="1"/>
</dbReference>
<dbReference type="InterPro" id="IPR000235">
    <property type="entry name" value="Ribosomal_uS7"/>
</dbReference>
<dbReference type="InterPro" id="IPR005717">
    <property type="entry name" value="Ribosomal_uS7_bac/org-type"/>
</dbReference>
<dbReference type="InterPro" id="IPR020606">
    <property type="entry name" value="Ribosomal_uS7_CS"/>
</dbReference>
<dbReference type="InterPro" id="IPR023798">
    <property type="entry name" value="Ribosomal_uS7_dom"/>
</dbReference>
<dbReference type="InterPro" id="IPR036823">
    <property type="entry name" value="Ribosomal_uS7_dom_sf"/>
</dbReference>
<dbReference type="NCBIfam" id="TIGR01029">
    <property type="entry name" value="rpsG_bact"/>
    <property type="match status" value="1"/>
</dbReference>
<dbReference type="PANTHER" id="PTHR11205">
    <property type="entry name" value="RIBOSOMAL PROTEIN S7"/>
    <property type="match status" value="1"/>
</dbReference>
<dbReference type="Pfam" id="PF00177">
    <property type="entry name" value="Ribosomal_S7"/>
    <property type="match status" value="1"/>
</dbReference>
<dbReference type="PIRSF" id="PIRSF002122">
    <property type="entry name" value="RPS7p_RPS7a_RPS5e_RPS7o"/>
    <property type="match status" value="1"/>
</dbReference>
<dbReference type="SUPFAM" id="SSF47973">
    <property type="entry name" value="Ribosomal protein S7"/>
    <property type="match status" value="1"/>
</dbReference>
<dbReference type="PROSITE" id="PS00052">
    <property type="entry name" value="RIBOSOMAL_S7"/>
    <property type="match status" value="1"/>
</dbReference>
<accession>A1KB31</accession>
<protein>
    <recommendedName>
        <fullName evidence="1">Small ribosomal subunit protein uS7</fullName>
    </recommendedName>
    <alternativeName>
        <fullName evidence="2">30S ribosomal protein S7</fullName>
    </alternativeName>
</protein>
<reference key="1">
    <citation type="journal article" date="2006" name="Nat. Biotechnol.">
        <title>Complete genome of the mutualistic, N2-fixing grass endophyte Azoarcus sp. strain BH72.</title>
        <authorList>
            <person name="Krause A."/>
            <person name="Ramakumar A."/>
            <person name="Bartels D."/>
            <person name="Battistoni F."/>
            <person name="Bekel T."/>
            <person name="Boch J."/>
            <person name="Boehm M."/>
            <person name="Friedrich F."/>
            <person name="Hurek T."/>
            <person name="Krause L."/>
            <person name="Linke B."/>
            <person name="McHardy A.C."/>
            <person name="Sarkar A."/>
            <person name="Schneiker S."/>
            <person name="Syed A.A."/>
            <person name="Thauer R."/>
            <person name="Vorhoelter F.-J."/>
            <person name="Weidner S."/>
            <person name="Puehler A."/>
            <person name="Reinhold-Hurek B."/>
            <person name="Kaiser O."/>
            <person name="Goesmann A."/>
        </authorList>
    </citation>
    <scope>NUCLEOTIDE SEQUENCE [LARGE SCALE GENOMIC DNA]</scope>
    <source>
        <strain>BH72</strain>
    </source>
</reference>
<evidence type="ECO:0000255" key="1">
    <source>
        <dbReference type="HAMAP-Rule" id="MF_00480"/>
    </source>
</evidence>
<evidence type="ECO:0000305" key="2"/>
<sequence>MPRRREVPKREVLPDPKFASQDVSKFINVIMQSGKKSVAERIVYGAFDHITAKASKDPLEVFAAAVANVKPVVEVKSRRVGGANYQVPVEVRPSRRMALSMRWLREAARKRAEKSMAQRLAGELLEAAEGRGAAMKKREEVHRMAEANKAFSHYRF</sequence>
<keyword id="KW-1185">Reference proteome</keyword>
<keyword id="KW-0687">Ribonucleoprotein</keyword>
<keyword id="KW-0689">Ribosomal protein</keyword>
<keyword id="KW-0694">RNA-binding</keyword>
<keyword id="KW-0699">rRNA-binding</keyword>
<keyword id="KW-0820">tRNA-binding</keyword>
<comment type="function">
    <text evidence="1">One of the primary rRNA binding proteins, it binds directly to 16S rRNA where it nucleates assembly of the head domain of the 30S subunit. Is located at the subunit interface close to the decoding center, probably blocks exit of the E-site tRNA.</text>
</comment>
<comment type="subunit">
    <text evidence="1">Part of the 30S ribosomal subunit. Contacts proteins S9 and S11.</text>
</comment>
<comment type="similarity">
    <text evidence="1">Belongs to the universal ribosomal protein uS7 family.</text>
</comment>
<feature type="chain" id="PRO_1000014145" description="Small ribosomal subunit protein uS7">
    <location>
        <begin position="1"/>
        <end position="156"/>
    </location>
</feature>
<gene>
    <name evidence="1" type="primary">rpsG</name>
    <name type="ordered locus">azo3421</name>
</gene>
<proteinExistence type="inferred from homology"/>